<gene>
    <name evidence="5 6" type="primary">Bcl10</name>
</gene>
<sequence length="233" mass="25999">MEAPAPSLTEEDLTEVKKDALENLRVYLCEKIIAERHFDHLRAKKILSREDTEEISCRTSSRKRAGKLLDYLQENPKGLDTLVESIRREKTQNFLIQKITDEVLKLRNIKLEHLKGLKCSSCEPFAAGATNNLSRSNSDESNFSEKQRPSTVIYHPEGESSTAPFFSTESSLNLPVLEVGRLENSSFSSASLPRPGDPGAPPLPPDLRLEEGGSCGNSSEMFLPLRSRALSRQ</sequence>
<organism>
    <name type="scientific">Rattus norvegicus</name>
    <name type="common">Rat</name>
    <dbReference type="NCBI Taxonomy" id="10116"/>
    <lineage>
        <taxon>Eukaryota</taxon>
        <taxon>Metazoa</taxon>
        <taxon>Chordata</taxon>
        <taxon>Craniata</taxon>
        <taxon>Vertebrata</taxon>
        <taxon>Euteleostomi</taxon>
        <taxon>Mammalia</taxon>
        <taxon>Eutheria</taxon>
        <taxon>Euarchontoglires</taxon>
        <taxon>Glires</taxon>
        <taxon>Rodentia</taxon>
        <taxon>Myomorpha</taxon>
        <taxon>Muroidea</taxon>
        <taxon>Muridae</taxon>
        <taxon>Murinae</taxon>
        <taxon>Rattus</taxon>
    </lineage>
</organism>
<name>BCL10_RAT</name>
<dbReference type="EMBL" id="AB016069">
    <property type="protein sequence ID" value="BAA88822.1"/>
    <property type="molecule type" value="mRNA"/>
</dbReference>
<dbReference type="EMBL" id="BC061772">
    <property type="protein sequence ID" value="AAH61772.1"/>
    <property type="molecule type" value="mRNA"/>
</dbReference>
<dbReference type="RefSeq" id="NP_112618.1">
    <property type="nucleotide sequence ID" value="NM_031328.2"/>
</dbReference>
<dbReference type="BMRB" id="Q9QYN5"/>
<dbReference type="SMR" id="Q9QYN5"/>
<dbReference type="BioGRID" id="249715">
    <property type="interactions" value="2"/>
</dbReference>
<dbReference type="FunCoup" id="Q9QYN5">
    <property type="interactions" value="1437"/>
</dbReference>
<dbReference type="STRING" id="10116.ENSRNOP00000019911"/>
<dbReference type="iPTMnet" id="Q9QYN5"/>
<dbReference type="PhosphoSitePlus" id="Q9QYN5"/>
<dbReference type="PaxDb" id="10116-ENSRNOP00000019911"/>
<dbReference type="Ensembl" id="ENSRNOT00000019911.7">
    <property type="protein sequence ID" value="ENSRNOP00000019911.5"/>
    <property type="gene ID" value="ENSRNOG00000042389.4"/>
</dbReference>
<dbReference type="GeneID" id="83477"/>
<dbReference type="KEGG" id="rno:83477"/>
<dbReference type="AGR" id="RGD:620544"/>
<dbReference type="CTD" id="8915"/>
<dbReference type="RGD" id="620544">
    <property type="gene designation" value="Bcl10"/>
</dbReference>
<dbReference type="eggNOG" id="ENOG502RXGH">
    <property type="taxonomic scope" value="Eukaryota"/>
</dbReference>
<dbReference type="GeneTree" id="ENSGT00490000043442"/>
<dbReference type="HOGENOM" id="CLU_103803_0_0_1"/>
<dbReference type="InParanoid" id="Q9QYN5"/>
<dbReference type="OMA" id="HPDGEQS"/>
<dbReference type="OrthoDB" id="5984934at2759"/>
<dbReference type="PhylomeDB" id="Q9QYN5"/>
<dbReference type="Reactome" id="R-RNO-1169091">
    <property type="pathway name" value="Activation of NF-kappaB in B cells"/>
</dbReference>
<dbReference type="Reactome" id="R-RNO-202424">
    <property type="pathway name" value="Downstream TCR signaling"/>
</dbReference>
<dbReference type="Reactome" id="R-RNO-2871837">
    <property type="pathway name" value="FCERI mediated NF-kB activation"/>
</dbReference>
<dbReference type="Reactome" id="R-RNO-5607764">
    <property type="pathway name" value="CLEC7A (Dectin-1) signaling"/>
</dbReference>
<dbReference type="Reactome" id="R-RNO-8866654">
    <property type="pathway name" value="E3 ubiquitin ligases ubiquitinate target proteins"/>
</dbReference>
<dbReference type="PRO" id="PR:Q9QYN5"/>
<dbReference type="Proteomes" id="UP000002494">
    <property type="component" value="Chromosome 2"/>
</dbReference>
<dbReference type="Bgee" id="ENSRNOG00000042389">
    <property type="expression patterns" value="Expressed in jejunum and 20 other cell types or tissues"/>
</dbReference>
<dbReference type="GO" id="GO:0032449">
    <property type="term" value="C:CBM complex"/>
    <property type="evidence" value="ECO:0000250"/>
    <property type="project" value="UniProtKB"/>
</dbReference>
<dbReference type="GO" id="GO:0005737">
    <property type="term" value="C:cytoplasm"/>
    <property type="evidence" value="ECO:0000250"/>
    <property type="project" value="UniProtKB"/>
</dbReference>
<dbReference type="GO" id="GO:0005881">
    <property type="term" value="C:cytoplasmic microtubule"/>
    <property type="evidence" value="ECO:0000250"/>
    <property type="project" value="UniProtKB"/>
</dbReference>
<dbReference type="GO" id="GO:0005829">
    <property type="term" value="C:cytosol"/>
    <property type="evidence" value="ECO:0000250"/>
    <property type="project" value="UniProtKB"/>
</dbReference>
<dbReference type="GO" id="GO:0001772">
    <property type="term" value="C:immunological synapse"/>
    <property type="evidence" value="ECO:0000266"/>
    <property type="project" value="RGD"/>
</dbReference>
<dbReference type="GO" id="GO:0005764">
    <property type="term" value="C:lysosome"/>
    <property type="evidence" value="ECO:0000250"/>
    <property type="project" value="UniProtKB"/>
</dbReference>
<dbReference type="GO" id="GO:0045121">
    <property type="term" value="C:membrane raft"/>
    <property type="evidence" value="ECO:0000266"/>
    <property type="project" value="RGD"/>
</dbReference>
<dbReference type="GO" id="GO:0005654">
    <property type="term" value="C:nucleoplasm"/>
    <property type="evidence" value="ECO:0007669"/>
    <property type="project" value="Ensembl"/>
</dbReference>
<dbReference type="GO" id="GO:0005634">
    <property type="term" value="C:nucleus"/>
    <property type="evidence" value="ECO:0000250"/>
    <property type="project" value="UniProtKB"/>
</dbReference>
<dbReference type="GO" id="GO:0048471">
    <property type="term" value="C:perinuclear region of cytoplasm"/>
    <property type="evidence" value="ECO:0000250"/>
    <property type="project" value="UniProtKB"/>
</dbReference>
<dbReference type="GO" id="GO:0002096">
    <property type="term" value="C:polkadots"/>
    <property type="evidence" value="ECO:0000266"/>
    <property type="project" value="RGD"/>
</dbReference>
<dbReference type="GO" id="GO:0032991">
    <property type="term" value="C:protein-containing complex"/>
    <property type="evidence" value="ECO:0000314"/>
    <property type="project" value="RGD"/>
</dbReference>
<dbReference type="GO" id="GO:0050700">
    <property type="term" value="F:CARD domain binding"/>
    <property type="evidence" value="ECO:0000266"/>
    <property type="project" value="RGD"/>
</dbReference>
<dbReference type="GO" id="GO:0140296">
    <property type="term" value="F:general transcription initiation factor binding"/>
    <property type="evidence" value="ECO:0000250"/>
    <property type="project" value="UniProtKB"/>
</dbReference>
<dbReference type="GO" id="GO:0042802">
    <property type="term" value="F:identical protein binding"/>
    <property type="evidence" value="ECO:0000250"/>
    <property type="project" value="UniProtKB"/>
</dbReference>
<dbReference type="GO" id="GO:0019209">
    <property type="term" value="F:kinase activator activity"/>
    <property type="evidence" value="ECO:0007669"/>
    <property type="project" value="Ensembl"/>
</dbReference>
<dbReference type="GO" id="GO:0051059">
    <property type="term" value="F:NF-kappaB binding"/>
    <property type="evidence" value="ECO:0000250"/>
    <property type="project" value="UniProtKB"/>
</dbReference>
<dbReference type="GO" id="GO:0002020">
    <property type="term" value="F:protease binding"/>
    <property type="evidence" value="ECO:0000266"/>
    <property type="project" value="RGD"/>
</dbReference>
<dbReference type="GO" id="GO:0043422">
    <property type="term" value="F:protein kinase B binding"/>
    <property type="evidence" value="ECO:0000250"/>
    <property type="project" value="UniProtKB"/>
</dbReference>
<dbReference type="GO" id="GO:0044877">
    <property type="term" value="F:protein-containing complex binding"/>
    <property type="evidence" value="ECO:0000353"/>
    <property type="project" value="RGD"/>
</dbReference>
<dbReference type="GO" id="GO:0030674">
    <property type="term" value="F:protein-macromolecule adaptor activity"/>
    <property type="evidence" value="ECO:0000266"/>
    <property type="project" value="RGD"/>
</dbReference>
<dbReference type="GO" id="GO:0035591">
    <property type="term" value="F:signaling adaptor activity"/>
    <property type="evidence" value="ECO:0000266"/>
    <property type="project" value="RGD"/>
</dbReference>
<dbReference type="GO" id="GO:0003713">
    <property type="term" value="F:transcription coactivator activity"/>
    <property type="evidence" value="ECO:0000250"/>
    <property type="project" value="UniProtKB"/>
</dbReference>
<dbReference type="GO" id="GO:0031625">
    <property type="term" value="F:ubiquitin protein ligase binding"/>
    <property type="evidence" value="ECO:0000250"/>
    <property type="project" value="UniProtKB"/>
</dbReference>
<dbReference type="GO" id="GO:0002250">
    <property type="term" value="P:adaptive immune response"/>
    <property type="evidence" value="ECO:0000250"/>
    <property type="project" value="UniProtKB"/>
</dbReference>
<dbReference type="GO" id="GO:0061760">
    <property type="term" value="P:antifungal innate immune response"/>
    <property type="evidence" value="ECO:0000250"/>
    <property type="project" value="UniProtKB"/>
</dbReference>
<dbReference type="GO" id="GO:0097190">
    <property type="term" value="P:apoptotic signaling pathway"/>
    <property type="evidence" value="ECO:0000266"/>
    <property type="project" value="RGD"/>
</dbReference>
<dbReference type="GO" id="GO:0001783">
    <property type="term" value="P:B cell apoptotic process"/>
    <property type="evidence" value="ECO:0000266"/>
    <property type="project" value="RGD"/>
</dbReference>
<dbReference type="GO" id="GO:0006968">
    <property type="term" value="P:cellular defense response"/>
    <property type="evidence" value="ECO:0000266"/>
    <property type="project" value="RGD"/>
</dbReference>
<dbReference type="GO" id="GO:0071222">
    <property type="term" value="P:cellular response to lipopolysaccharide"/>
    <property type="evidence" value="ECO:0000250"/>
    <property type="project" value="UniProtKB"/>
</dbReference>
<dbReference type="GO" id="GO:0071260">
    <property type="term" value="P:cellular response to mechanical stimulus"/>
    <property type="evidence" value="ECO:0000266"/>
    <property type="project" value="RGD"/>
</dbReference>
<dbReference type="GO" id="GO:0016064">
    <property type="term" value="P:immunoglobulin mediated immune response"/>
    <property type="evidence" value="ECO:0000266"/>
    <property type="project" value="RGD"/>
</dbReference>
<dbReference type="GO" id="GO:0045087">
    <property type="term" value="P:innate immune response"/>
    <property type="evidence" value="ECO:0000250"/>
    <property type="project" value="UniProtKB"/>
</dbReference>
<dbReference type="GO" id="GO:0031663">
    <property type="term" value="P:lipopolysaccharide-mediated signaling pathway"/>
    <property type="evidence" value="ECO:0000250"/>
    <property type="project" value="UniProtKB"/>
</dbReference>
<dbReference type="GO" id="GO:0002906">
    <property type="term" value="P:negative regulation of mature B cell apoptotic process"/>
    <property type="evidence" value="ECO:0000250"/>
    <property type="project" value="UniProtKB"/>
</dbReference>
<dbReference type="GO" id="GO:0001843">
    <property type="term" value="P:neural tube closure"/>
    <property type="evidence" value="ECO:0000250"/>
    <property type="project" value="UniProtKB"/>
</dbReference>
<dbReference type="GO" id="GO:0038061">
    <property type="term" value="P:non-canonical NF-kappaB signal transduction"/>
    <property type="evidence" value="ECO:0000266"/>
    <property type="project" value="RGD"/>
</dbReference>
<dbReference type="GO" id="GO:0043065">
    <property type="term" value="P:positive regulation of apoptotic process"/>
    <property type="evidence" value="ECO:0000314"/>
    <property type="project" value="RGD"/>
</dbReference>
<dbReference type="GO" id="GO:0043123">
    <property type="term" value="P:positive regulation of canonical NF-kappaB signal transduction"/>
    <property type="evidence" value="ECO:0000250"/>
    <property type="project" value="UniProtKB"/>
</dbReference>
<dbReference type="GO" id="GO:0001819">
    <property type="term" value="P:positive regulation of cytokine production"/>
    <property type="evidence" value="ECO:0000266"/>
    <property type="project" value="RGD"/>
</dbReference>
<dbReference type="GO" id="GO:0045893">
    <property type="term" value="P:positive regulation of DNA-templated transcription"/>
    <property type="evidence" value="ECO:0000250"/>
    <property type="project" value="UniProtKB"/>
</dbReference>
<dbReference type="GO" id="GO:2001238">
    <property type="term" value="P:positive regulation of extrinsic apoptotic signaling pathway"/>
    <property type="evidence" value="ECO:0000250"/>
    <property type="project" value="UniProtKB"/>
</dbReference>
<dbReference type="GO" id="GO:0032757">
    <property type="term" value="P:positive regulation of interleukin-8 production"/>
    <property type="evidence" value="ECO:0000250"/>
    <property type="project" value="UniProtKB"/>
</dbReference>
<dbReference type="GO" id="GO:0051092">
    <property type="term" value="P:positive regulation of NF-kappaB transcription factor activity"/>
    <property type="evidence" value="ECO:0000250"/>
    <property type="project" value="UniProtKB"/>
</dbReference>
<dbReference type="GO" id="GO:0042327">
    <property type="term" value="P:positive regulation of phosphorylation"/>
    <property type="evidence" value="ECO:0000250"/>
    <property type="project" value="UniProtKB"/>
</dbReference>
<dbReference type="GO" id="GO:0031398">
    <property type="term" value="P:positive regulation of protein ubiquitination"/>
    <property type="evidence" value="ECO:0000250"/>
    <property type="project" value="UniProtKB"/>
</dbReference>
<dbReference type="GO" id="GO:0050870">
    <property type="term" value="P:positive regulation of T cell activation"/>
    <property type="evidence" value="ECO:0000266"/>
    <property type="project" value="RGD"/>
</dbReference>
<dbReference type="GO" id="GO:0050862">
    <property type="term" value="P:positive regulation of T cell receptor signaling pathway"/>
    <property type="evidence" value="ECO:0000250"/>
    <property type="project" value="UniProtKB"/>
</dbReference>
<dbReference type="GO" id="GO:0012501">
    <property type="term" value="P:programmed cell death"/>
    <property type="evidence" value="ECO:0000250"/>
    <property type="project" value="UniProtKB"/>
</dbReference>
<dbReference type="GO" id="GO:0051260">
    <property type="term" value="P:protein homooligomerization"/>
    <property type="evidence" value="ECO:0000250"/>
    <property type="project" value="UniProtKB"/>
</dbReference>
<dbReference type="GO" id="GO:0050856">
    <property type="term" value="P:regulation of T cell receptor signaling pathway"/>
    <property type="evidence" value="ECO:0000266"/>
    <property type="project" value="RGD"/>
</dbReference>
<dbReference type="GO" id="GO:0032094">
    <property type="term" value="P:response to food"/>
    <property type="evidence" value="ECO:0000250"/>
    <property type="project" value="UniProtKB"/>
</dbReference>
<dbReference type="GO" id="GO:0009620">
    <property type="term" value="P:response to fungus"/>
    <property type="evidence" value="ECO:0000266"/>
    <property type="project" value="RGD"/>
</dbReference>
<dbReference type="GO" id="GO:0032496">
    <property type="term" value="P:response to lipopolysaccharide"/>
    <property type="evidence" value="ECO:0000266"/>
    <property type="project" value="RGD"/>
</dbReference>
<dbReference type="GO" id="GO:0070231">
    <property type="term" value="P:T cell apoptotic process"/>
    <property type="evidence" value="ECO:0000266"/>
    <property type="project" value="RGD"/>
</dbReference>
<dbReference type="GO" id="GO:0050852">
    <property type="term" value="P:T cell receptor signaling pathway"/>
    <property type="evidence" value="ECO:0000250"/>
    <property type="project" value="UniProtKB"/>
</dbReference>
<dbReference type="GO" id="GO:0002224">
    <property type="term" value="P:toll-like receptor signaling pathway"/>
    <property type="evidence" value="ECO:0000266"/>
    <property type="project" value="RGD"/>
</dbReference>
<dbReference type="CDD" id="cd08810">
    <property type="entry name" value="CARD_BCL10"/>
    <property type="match status" value="1"/>
</dbReference>
<dbReference type="FunFam" id="1.10.533.10:FF:000022">
    <property type="entry name" value="B-cell lymphoma/leukemia 10"/>
    <property type="match status" value="1"/>
</dbReference>
<dbReference type="Gene3D" id="1.10.533.10">
    <property type="entry name" value="Death Domain, Fas"/>
    <property type="match status" value="1"/>
</dbReference>
<dbReference type="InterPro" id="IPR033238">
    <property type="entry name" value="BCL10/E10"/>
</dbReference>
<dbReference type="InterPro" id="IPR001315">
    <property type="entry name" value="CARD"/>
</dbReference>
<dbReference type="InterPro" id="IPR042143">
    <property type="entry name" value="CARD_BCL10"/>
</dbReference>
<dbReference type="InterPro" id="IPR011029">
    <property type="entry name" value="DEATH-like_dom_sf"/>
</dbReference>
<dbReference type="PANTHER" id="PTHR34920">
    <property type="entry name" value="B-CELL LYMPHOMA/LEUKEMIA 10"/>
    <property type="match status" value="1"/>
</dbReference>
<dbReference type="PANTHER" id="PTHR34920:SF1">
    <property type="entry name" value="B-CELL LYMPHOMA_LEUKEMIA 10"/>
    <property type="match status" value="1"/>
</dbReference>
<dbReference type="Pfam" id="PF00619">
    <property type="entry name" value="CARD"/>
    <property type="match status" value="1"/>
</dbReference>
<dbReference type="SUPFAM" id="SSF47986">
    <property type="entry name" value="DEATH domain"/>
    <property type="match status" value="1"/>
</dbReference>
<dbReference type="PROSITE" id="PS50209">
    <property type="entry name" value="CARD"/>
    <property type="match status" value="1"/>
</dbReference>
<reference key="1">
    <citation type="journal article" date="2000" name="J. Biol. Chem.">
        <title>Regulatory mechanisms of TRAF2-mediated signal transduction by Bcl10, a MALT lymphoma-associated protein.</title>
        <authorList>
            <person name="Yoneda T."/>
            <person name="Imaizumi K."/>
            <person name="Maeda M."/>
            <person name="Yui D."/>
            <person name="Manabe T."/>
            <person name="Katayama T."/>
            <person name="Sato N."/>
            <person name="Gomi F."/>
            <person name="Morihara T."/>
            <person name="Mori Y."/>
            <person name="Miyoshi K."/>
            <person name="Hitomi J."/>
            <person name="Ugawa S."/>
            <person name="Yamada S."/>
            <person name="Okabe M."/>
            <person name="Tohyama M."/>
        </authorList>
    </citation>
    <scope>NUCLEOTIDE SEQUENCE [MRNA]</scope>
    <source>
        <tissue>Embryonic brain</tissue>
    </source>
</reference>
<reference key="2">
    <citation type="journal article" date="2004" name="Genome Res.">
        <title>The status, quality, and expansion of the NIH full-length cDNA project: the Mammalian Gene Collection (MGC).</title>
        <authorList>
            <consortium name="The MGC Project Team"/>
        </authorList>
    </citation>
    <scope>NUCLEOTIDE SEQUENCE [LARGE SCALE MRNA]</scope>
    <source>
        <tissue>Prostate</tissue>
    </source>
</reference>
<comment type="function">
    <text evidence="1">Plays a key role in both adaptive and innate immune signaling by bridging CARD domain-containing proteins to immune activation. Acts by channeling adaptive and innate immune signaling downstream of CARD domain-containing proteins CARD9, CARD11 and CARD14 to activate NF-kappa-B and MAP kinase p38 (MAPK11, MAPK12, MAPK13 and/or MAPK14) pathways which stimulate expression of genes encoding pro-inflammatory cytokines and chemokines. Recruited by activated CARD domain-containing proteins: homooligomerized CARD domain-containing proteins form a nucleating helical template that recruits BCL10 via CARD-CARD interaction, thereby promoting polymerization of BCL10, subsequent recruitment of MALT1 and formation of a CBM complex. This leads to activation of NF-kappa-B and MAP kinase p38 (MAPK11, MAPK12, MAPK13 and/or MAPK14) pathways which stimulate expression of genes encoding pro-inflammatory cytokines and chemokines. Activated by CARD9 downstream of C-type lectin receptors; CARD9-mediated signals are essential for antifungal immunity. Activated by CARD11 downstream of T-cell receptor (TCR) and B-cell receptor (BCR). Promotes apoptosis, pro-caspase-9 maturation and activation of NF-kappa-B via NIK and IKK.</text>
</comment>
<comment type="subunit">
    <text evidence="1 2">Homomultimer; homooligomerized following recruitment by CARD domain-containing proteins that form a nucleating helical template that recruits BCL10 via CARD-CARD interaction. Self-associates by CARD-CARD interaction and interacts with other CARD-proteins such as CARD9, CARD10, CARD11 and CARD14. Forms a complex with CARD14 and MALT1; resulting in the formation of a CBM (CARD14-BCL10-MALT1) complex. Forms a complex with CARD11 and MALT1; resulting in the formation of a CBM (CARD11-BCL10-MALT1) complex (By similarity). Forms a complex with CARD9 and MALT1; resulting in the formation of a CBM (CARD9-BCL10-MALT1) complex (By similarity). Found in a membrane raft complex, at least composed of BCL10, CARD11, DPP4 and IKBKB. Binds caspase-9 with its C-terminal domain. Interacts with TRAF2 and BIRC2/c-IAP2 (By similarity). Interacts with PELI2 and SOCS3; these interactions may be mutually exclusive (By similarity).</text>
</comment>
<comment type="subcellular location">
    <subcellularLocation>
        <location evidence="1">Cytoplasm</location>
        <location evidence="1">Perinuclear region</location>
    </subcellularLocation>
    <subcellularLocation>
        <location evidence="1">Membrane raft</location>
    </subcellularLocation>
    <text evidence="1">Appears to have a perinuclear, compact and filamentous pattern of expression. Also found in the nucleus of several types of tumor cells. Colocalized with DPP4 in membrane rafts.</text>
</comment>
<comment type="PTM">
    <text evidence="1">Phosphorylated. Phosphorylation results in dissociation from TRAF2 and binding to BIRC2/c-IAP2. Phosphorylated by IKBKB/IKKB.</text>
</comment>
<comment type="PTM">
    <text evidence="1">Ubiquitinated via both 'Lys-63'-linked and linear ('Met-1'-linked) polyubiquitin chains in response to T-cell receptor (TCR) activation. Ubiquitination is recognized by IKBKG/NEMO, the regulatory subunit of I-kappa-B kinase (IKK), and is required for TCR-induced NF-kappa-B activation. Linear ubiquitination at Lys-17, Lys-31 and Lys-63 is mediated by RNF31/HOIP; linear ubiquitination is recognized with much higher affinity than 'Lys-63'-linked ubiquitin by IKBKG/NEMO. CARD11 is required for linear ubiquitination by HOIP by promoting the targeting of BCL10 to RNF31/HOIP.</text>
</comment>
<comment type="PTM">
    <text evidence="1">Proteolytically cleaved by MALT1; required for T-cell activation.</text>
</comment>
<evidence type="ECO:0000250" key="1">
    <source>
        <dbReference type="UniProtKB" id="O95999"/>
    </source>
</evidence>
<evidence type="ECO:0000250" key="2">
    <source>
        <dbReference type="UniProtKB" id="Q9Z0H7"/>
    </source>
</evidence>
<evidence type="ECO:0000255" key="3">
    <source>
        <dbReference type="PROSITE-ProRule" id="PRU00046"/>
    </source>
</evidence>
<evidence type="ECO:0000256" key="4">
    <source>
        <dbReference type="SAM" id="MobiDB-lite"/>
    </source>
</evidence>
<evidence type="ECO:0000303" key="5">
    <source>
    </source>
</evidence>
<evidence type="ECO:0000312" key="6">
    <source>
        <dbReference type="RGD" id="620544"/>
    </source>
</evidence>
<keyword id="KW-0007">Acetylation</keyword>
<keyword id="KW-1064">Adaptive immunity</keyword>
<keyword id="KW-0053">Apoptosis</keyword>
<keyword id="KW-0963">Cytoplasm</keyword>
<keyword id="KW-0391">Immunity</keyword>
<keyword id="KW-0399">Innate immunity</keyword>
<keyword id="KW-1017">Isopeptide bond</keyword>
<keyword id="KW-0472">Membrane</keyword>
<keyword id="KW-0597">Phosphoprotein</keyword>
<keyword id="KW-1185">Reference proteome</keyword>
<keyword id="KW-0043">Tumor suppressor</keyword>
<keyword id="KW-0832">Ubl conjugation</keyword>
<accession>Q9QYN5</accession>
<feature type="chain" id="PRO_0000144076" description="B-cell lymphoma/leukemia 10">
    <location>
        <begin position="1"/>
        <end position="233"/>
    </location>
</feature>
<feature type="domain" description="CARD" evidence="3">
    <location>
        <begin position="13"/>
        <end position="101"/>
    </location>
</feature>
<feature type="region of interest" description="Disordered" evidence="4">
    <location>
        <begin position="130"/>
        <end position="149"/>
    </location>
</feature>
<feature type="region of interest" description="Disordered" evidence="4">
    <location>
        <begin position="186"/>
        <end position="233"/>
    </location>
</feature>
<feature type="compositionally biased region" description="Polar residues" evidence="4">
    <location>
        <begin position="130"/>
        <end position="141"/>
    </location>
</feature>
<feature type="compositionally biased region" description="Pro residues" evidence="4">
    <location>
        <begin position="195"/>
        <end position="205"/>
    </location>
</feature>
<feature type="site" description="Cleavage; by MALT1" evidence="1">
    <location>
        <begin position="228"/>
        <end position="229"/>
    </location>
</feature>
<feature type="modified residue" description="N-acetylmethionine" evidence="1">
    <location>
        <position position="1"/>
    </location>
</feature>
<feature type="modified residue" description="Phosphoserine" evidence="1">
    <location>
        <position position="138"/>
    </location>
</feature>
<feature type="cross-link" description="Glycyl lysine isopeptide (Lys-Gly) (interchain with G-Cter in ubiquitin)" evidence="1">
    <location>
        <position position="17"/>
    </location>
</feature>
<feature type="cross-link" description="Glycyl lysine isopeptide (Lys-Gly) (interchain with G-Cter in ubiquitin)" evidence="1">
    <location>
        <position position="31"/>
    </location>
</feature>
<feature type="cross-link" description="Glycyl lysine isopeptide (Lys-Gly) (interchain with G-Cter in ubiquitin)" evidence="1">
    <location>
        <position position="63"/>
    </location>
</feature>
<protein>
    <recommendedName>
        <fullName>B-cell lymphoma/leukemia 10</fullName>
    </recommendedName>
    <alternativeName>
        <fullName evidence="5">B-cell CLL/lymphoma 10</fullName>
        <shortName evidence="5">Bcl-10</shortName>
    </alternativeName>
    <alternativeName>
        <fullName>R-RCD1</fullName>
        <shortName>RCD</shortName>
    </alternativeName>
</protein>
<proteinExistence type="evidence at transcript level"/>